<feature type="chain" id="PRO_1000211964" description="Small ribosomal subunit protein eS24">
    <location>
        <begin position="1"/>
        <end position="120"/>
    </location>
</feature>
<feature type="region of interest" description="Disordered" evidence="2">
    <location>
        <begin position="101"/>
        <end position="120"/>
    </location>
</feature>
<name>RS24_SACI7</name>
<reference key="1">
    <citation type="journal article" date="2009" name="Proc. Natl. Acad. Sci. U.S.A.">
        <title>Biogeography of the Sulfolobus islandicus pan-genome.</title>
        <authorList>
            <person name="Reno M.L."/>
            <person name="Held N.L."/>
            <person name="Fields C.J."/>
            <person name="Burke P.V."/>
            <person name="Whitaker R.J."/>
        </authorList>
    </citation>
    <scope>NUCLEOTIDE SEQUENCE [LARGE SCALE GENOMIC DNA]</scope>
    <source>
        <strain>Y.G.57.14 / Yellowstone #1</strain>
    </source>
</reference>
<sequence>MESQAKVKISDKAEGIIERDVQNAVIGRREISLKVYHMGSGTPSRKDIIKAIIQAFASQENLVVVRKISTSYGAGISNIKLHIYKSREILEKIEPKYLLDRDAGTKQKKGGSKGGQGAKG</sequence>
<evidence type="ECO:0000255" key="1">
    <source>
        <dbReference type="HAMAP-Rule" id="MF_00545"/>
    </source>
</evidence>
<evidence type="ECO:0000256" key="2">
    <source>
        <dbReference type="SAM" id="MobiDB-lite"/>
    </source>
</evidence>
<evidence type="ECO:0000305" key="3"/>
<proteinExistence type="inferred from homology"/>
<comment type="similarity">
    <text evidence="1">Belongs to the eukaryotic ribosomal protein eS24 family.</text>
</comment>
<keyword id="KW-0687">Ribonucleoprotein</keyword>
<keyword id="KW-0689">Ribosomal protein</keyword>
<accession>C3N750</accession>
<organism>
    <name type="scientific">Saccharolobus islandicus (strain Y.G.57.14 / Yellowstone #1)</name>
    <name type="common">Sulfolobus islandicus</name>
    <dbReference type="NCBI Taxonomy" id="439386"/>
    <lineage>
        <taxon>Archaea</taxon>
        <taxon>Thermoproteota</taxon>
        <taxon>Thermoprotei</taxon>
        <taxon>Sulfolobales</taxon>
        <taxon>Sulfolobaceae</taxon>
        <taxon>Saccharolobus</taxon>
    </lineage>
</organism>
<dbReference type="EMBL" id="CP001403">
    <property type="protein sequence ID" value="ACP46044.1"/>
    <property type="molecule type" value="Genomic_DNA"/>
</dbReference>
<dbReference type="RefSeq" id="WP_012713901.1">
    <property type="nucleotide sequence ID" value="NC_012622.1"/>
</dbReference>
<dbReference type="SMR" id="C3N750"/>
<dbReference type="KEGG" id="siy:YG5714_1787"/>
<dbReference type="HOGENOM" id="CLU_107248_3_2_2"/>
<dbReference type="Proteomes" id="UP000002308">
    <property type="component" value="Chromosome"/>
</dbReference>
<dbReference type="GO" id="GO:1990904">
    <property type="term" value="C:ribonucleoprotein complex"/>
    <property type="evidence" value="ECO:0007669"/>
    <property type="project" value="UniProtKB-KW"/>
</dbReference>
<dbReference type="GO" id="GO:0005840">
    <property type="term" value="C:ribosome"/>
    <property type="evidence" value="ECO:0007669"/>
    <property type="project" value="UniProtKB-KW"/>
</dbReference>
<dbReference type="GO" id="GO:0003735">
    <property type="term" value="F:structural constituent of ribosome"/>
    <property type="evidence" value="ECO:0007669"/>
    <property type="project" value="InterPro"/>
</dbReference>
<dbReference type="GO" id="GO:0006412">
    <property type="term" value="P:translation"/>
    <property type="evidence" value="ECO:0007669"/>
    <property type="project" value="UniProtKB-UniRule"/>
</dbReference>
<dbReference type="Gene3D" id="3.30.70.3370">
    <property type="match status" value="1"/>
</dbReference>
<dbReference type="HAMAP" id="MF_00545">
    <property type="entry name" value="Ribosomal_eS24"/>
    <property type="match status" value="1"/>
</dbReference>
<dbReference type="InterPro" id="IPR053709">
    <property type="entry name" value="eRP_eS24_sf"/>
</dbReference>
<dbReference type="InterPro" id="IPR001976">
    <property type="entry name" value="Ribosomal_eS24"/>
</dbReference>
<dbReference type="InterPro" id="IPR018098">
    <property type="entry name" value="Ribosomal_eS24_CS"/>
</dbReference>
<dbReference type="InterPro" id="IPR012678">
    <property type="entry name" value="Ribosomal_uL23/eL15/eS24_sf"/>
</dbReference>
<dbReference type="PANTHER" id="PTHR10496">
    <property type="entry name" value="40S RIBOSOMAL PROTEIN S24"/>
    <property type="match status" value="1"/>
</dbReference>
<dbReference type="Pfam" id="PF01282">
    <property type="entry name" value="Ribosomal_S24e"/>
    <property type="match status" value="1"/>
</dbReference>
<dbReference type="SUPFAM" id="SSF54189">
    <property type="entry name" value="Ribosomal proteins S24e, L23 and L15e"/>
    <property type="match status" value="1"/>
</dbReference>
<dbReference type="PROSITE" id="PS00529">
    <property type="entry name" value="RIBOSOMAL_S24E"/>
    <property type="match status" value="1"/>
</dbReference>
<protein>
    <recommendedName>
        <fullName evidence="1">Small ribosomal subunit protein eS24</fullName>
    </recommendedName>
    <alternativeName>
        <fullName evidence="3">30S ribosomal protein S24e</fullName>
    </alternativeName>
</protein>
<gene>
    <name evidence="1" type="primary">rps24e</name>
    <name type="ordered locus">YG5714_1787</name>
</gene>